<accession>Q30RQ5</accession>
<organism>
    <name type="scientific">Sulfurimonas denitrificans (strain ATCC 33889 / DSM 1251)</name>
    <name type="common">Thiomicrospira denitrificans (strain ATCC 33889 / DSM 1251)</name>
    <dbReference type="NCBI Taxonomy" id="326298"/>
    <lineage>
        <taxon>Bacteria</taxon>
        <taxon>Pseudomonadati</taxon>
        <taxon>Campylobacterota</taxon>
        <taxon>Epsilonproteobacteria</taxon>
        <taxon>Campylobacterales</taxon>
        <taxon>Sulfurimonadaceae</taxon>
        <taxon>Sulfurimonas</taxon>
    </lineage>
</organism>
<evidence type="ECO:0000255" key="1">
    <source>
        <dbReference type="HAMAP-Rule" id="MF_00487"/>
    </source>
</evidence>
<sequence length="319" mass="33698">MNQGKRVGIIGAGNVGATVAYSLAMLGSCHEIILRDNKIDVAKGKALDMSQAAAAVRSHTIVSVAEEMADLTNCDVVVVTAGSPRLPGMSRDDLLMINANITKDVIAGVAKYSPDAIIIMVSNPLDAMTYVALKESGFDRSRVIGMAGILDSARMASFIQEKLGYGGGQIRASVMGGHGDDMVPLARYSTVAGVPLTDLMSTSEINEIVIRTRNGGAEIVGHLKTGSAYYAPAKATALMVEAILKDTKQIHPCAVFLEGEYGHSDVVSGVPVMLGANGAEKIIEISLDESEKIMFEGSCNSVRTLIDTLNKNKFFDKGE</sequence>
<keyword id="KW-0520">NAD</keyword>
<keyword id="KW-0560">Oxidoreductase</keyword>
<keyword id="KW-1185">Reference proteome</keyword>
<keyword id="KW-0816">Tricarboxylic acid cycle</keyword>
<gene>
    <name evidence="1" type="primary">mdh</name>
    <name type="ordered locus">Suden_1048</name>
</gene>
<dbReference type="EC" id="1.1.1.37" evidence="1"/>
<dbReference type="EMBL" id="CP000153">
    <property type="protein sequence ID" value="ABB44326.1"/>
    <property type="molecule type" value="Genomic_DNA"/>
</dbReference>
<dbReference type="RefSeq" id="WP_011372678.1">
    <property type="nucleotide sequence ID" value="NC_007575.1"/>
</dbReference>
<dbReference type="SMR" id="Q30RQ5"/>
<dbReference type="STRING" id="326298.Suden_1048"/>
<dbReference type="KEGG" id="tdn:Suden_1048"/>
<dbReference type="eggNOG" id="COG0039">
    <property type="taxonomic scope" value="Bacteria"/>
</dbReference>
<dbReference type="HOGENOM" id="CLU_045401_2_1_7"/>
<dbReference type="OrthoDB" id="9802969at2"/>
<dbReference type="Proteomes" id="UP000002714">
    <property type="component" value="Chromosome"/>
</dbReference>
<dbReference type="GO" id="GO:0004459">
    <property type="term" value="F:L-lactate dehydrogenase activity"/>
    <property type="evidence" value="ECO:0007669"/>
    <property type="project" value="TreeGrafter"/>
</dbReference>
<dbReference type="GO" id="GO:0030060">
    <property type="term" value="F:L-malate dehydrogenase (NAD+) activity"/>
    <property type="evidence" value="ECO:0007669"/>
    <property type="project" value="UniProtKB-UniRule"/>
</dbReference>
<dbReference type="GO" id="GO:0006089">
    <property type="term" value="P:lactate metabolic process"/>
    <property type="evidence" value="ECO:0007669"/>
    <property type="project" value="TreeGrafter"/>
</dbReference>
<dbReference type="GO" id="GO:0006099">
    <property type="term" value="P:tricarboxylic acid cycle"/>
    <property type="evidence" value="ECO:0007669"/>
    <property type="project" value="UniProtKB-UniRule"/>
</dbReference>
<dbReference type="CDD" id="cd01339">
    <property type="entry name" value="LDH-like_MDH"/>
    <property type="match status" value="1"/>
</dbReference>
<dbReference type="FunFam" id="3.40.50.720:FF:000018">
    <property type="entry name" value="Malate dehydrogenase"/>
    <property type="match status" value="1"/>
</dbReference>
<dbReference type="FunFam" id="3.90.110.10:FF:000004">
    <property type="entry name" value="Malate dehydrogenase"/>
    <property type="match status" value="1"/>
</dbReference>
<dbReference type="Gene3D" id="3.90.110.10">
    <property type="entry name" value="Lactate dehydrogenase/glycoside hydrolase, family 4, C-terminal"/>
    <property type="match status" value="1"/>
</dbReference>
<dbReference type="Gene3D" id="3.40.50.720">
    <property type="entry name" value="NAD(P)-binding Rossmann-like Domain"/>
    <property type="match status" value="1"/>
</dbReference>
<dbReference type="HAMAP" id="MF_00487">
    <property type="entry name" value="Malate_dehydrog_3"/>
    <property type="match status" value="1"/>
</dbReference>
<dbReference type="InterPro" id="IPR001557">
    <property type="entry name" value="L-lactate/malate_DH"/>
</dbReference>
<dbReference type="InterPro" id="IPR022383">
    <property type="entry name" value="Lactate/malate_DH_C"/>
</dbReference>
<dbReference type="InterPro" id="IPR001236">
    <property type="entry name" value="Lactate/malate_DH_N"/>
</dbReference>
<dbReference type="InterPro" id="IPR015955">
    <property type="entry name" value="Lactate_DH/Glyco_Ohase_4_C"/>
</dbReference>
<dbReference type="InterPro" id="IPR011275">
    <property type="entry name" value="Malate_DH_type3"/>
</dbReference>
<dbReference type="InterPro" id="IPR036291">
    <property type="entry name" value="NAD(P)-bd_dom_sf"/>
</dbReference>
<dbReference type="NCBIfam" id="TIGR01763">
    <property type="entry name" value="MalateDH_bact"/>
    <property type="match status" value="1"/>
</dbReference>
<dbReference type="NCBIfam" id="NF004863">
    <property type="entry name" value="PRK06223.1"/>
    <property type="match status" value="1"/>
</dbReference>
<dbReference type="PANTHER" id="PTHR43128">
    <property type="entry name" value="L-2-HYDROXYCARBOXYLATE DEHYDROGENASE (NAD(P)(+))"/>
    <property type="match status" value="1"/>
</dbReference>
<dbReference type="PANTHER" id="PTHR43128:SF16">
    <property type="entry name" value="L-LACTATE DEHYDROGENASE"/>
    <property type="match status" value="1"/>
</dbReference>
<dbReference type="Pfam" id="PF02866">
    <property type="entry name" value="Ldh_1_C"/>
    <property type="match status" value="1"/>
</dbReference>
<dbReference type="Pfam" id="PF00056">
    <property type="entry name" value="Ldh_1_N"/>
    <property type="match status" value="1"/>
</dbReference>
<dbReference type="PIRSF" id="PIRSF000102">
    <property type="entry name" value="Lac_mal_DH"/>
    <property type="match status" value="1"/>
</dbReference>
<dbReference type="PRINTS" id="PR00086">
    <property type="entry name" value="LLDHDRGNASE"/>
</dbReference>
<dbReference type="SUPFAM" id="SSF56327">
    <property type="entry name" value="LDH C-terminal domain-like"/>
    <property type="match status" value="1"/>
</dbReference>
<dbReference type="SUPFAM" id="SSF51735">
    <property type="entry name" value="NAD(P)-binding Rossmann-fold domains"/>
    <property type="match status" value="1"/>
</dbReference>
<comment type="function">
    <text evidence="1">Catalyzes the reversible oxidation of malate to oxaloacetate.</text>
</comment>
<comment type="catalytic activity">
    <reaction evidence="1">
        <text>(S)-malate + NAD(+) = oxaloacetate + NADH + H(+)</text>
        <dbReference type="Rhea" id="RHEA:21432"/>
        <dbReference type="ChEBI" id="CHEBI:15378"/>
        <dbReference type="ChEBI" id="CHEBI:15589"/>
        <dbReference type="ChEBI" id="CHEBI:16452"/>
        <dbReference type="ChEBI" id="CHEBI:57540"/>
        <dbReference type="ChEBI" id="CHEBI:57945"/>
        <dbReference type="EC" id="1.1.1.37"/>
    </reaction>
</comment>
<comment type="similarity">
    <text evidence="1">Belongs to the LDH/MDH superfamily. MDH type 3 family.</text>
</comment>
<proteinExistence type="inferred from homology"/>
<reference key="1">
    <citation type="journal article" date="2008" name="Appl. Environ. Microbiol.">
        <title>Genome of the epsilonproteobacterial chemolithoautotroph Sulfurimonas denitrificans.</title>
        <authorList>
            <person name="Sievert S.M."/>
            <person name="Scott K.M."/>
            <person name="Klotz M.G."/>
            <person name="Chain P.S.G."/>
            <person name="Hauser L.J."/>
            <person name="Hemp J."/>
            <person name="Huegler M."/>
            <person name="Land M."/>
            <person name="Lapidus A."/>
            <person name="Larimer F.W."/>
            <person name="Lucas S."/>
            <person name="Malfatti S.A."/>
            <person name="Meyer F."/>
            <person name="Paulsen I.T."/>
            <person name="Ren Q."/>
            <person name="Simon J."/>
            <person name="Bailey K."/>
            <person name="Diaz E."/>
            <person name="Fitzpatrick K.A."/>
            <person name="Glover B."/>
            <person name="Gwatney N."/>
            <person name="Korajkic A."/>
            <person name="Long A."/>
            <person name="Mobberley J.M."/>
            <person name="Pantry S.N."/>
            <person name="Pazder G."/>
            <person name="Peterson S."/>
            <person name="Quintanilla J.D."/>
            <person name="Sprinkle R."/>
            <person name="Stephens J."/>
            <person name="Thomas P."/>
            <person name="Vaughn R."/>
            <person name="Weber M.J."/>
            <person name="Wooten L.L."/>
        </authorList>
    </citation>
    <scope>NUCLEOTIDE SEQUENCE [LARGE SCALE GENOMIC DNA]</scope>
    <source>
        <strain>ATCC 33889 / DSM 1251</strain>
    </source>
</reference>
<protein>
    <recommendedName>
        <fullName evidence="1">Malate dehydrogenase</fullName>
        <ecNumber evidence="1">1.1.1.37</ecNumber>
    </recommendedName>
</protein>
<feature type="chain" id="PRO_0000241969" description="Malate dehydrogenase">
    <location>
        <begin position="1"/>
        <end position="319"/>
    </location>
</feature>
<feature type="active site" description="Proton acceptor" evidence="1">
    <location>
        <position position="178"/>
    </location>
</feature>
<feature type="binding site" evidence="1">
    <location>
        <begin position="11"/>
        <end position="16"/>
    </location>
    <ligand>
        <name>NAD(+)</name>
        <dbReference type="ChEBI" id="CHEBI:57540"/>
    </ligand>
</feature>
<feature type="binding site" evidence="1">
    <location>
        <position position="36"/>
    </location>
    <ligand>
        <name>NAD(+)</name>
        <dbReference type="ChEBI" id="CHEBI:57540"/>
    </ligand>
</feature>
<feature type="binding site" evidence="1">
    <location>
        <position position="85"/>
    </location>
    <ligand>
        <name>substrate</name>
    </ligand>
</feature>
<feature type="binding site" evidence="1">
    <location>
        <position position="91"/>
    </location>
    <ligand>
        <name>substrate</name>
    </ligand>
</feature>
<feature type="binding site" evidence="1">
    <location>
        <position position="98"/>
    </location>
    <ligand>
        <name>NAD(+)</name>
        <dbReference type="ChEBI" id="CHEBI:57540"/>
    </ligand>
</feature>
<feature type="binding site" evidence="1">
    <location>
        <begin position="121"/>
        <end position="123"/>
    </location>
    <ligand>
        <name>NAD(+)</name>
        <dbReference type="ChEBI" id="CHEBI:57540"/>
    </ligand>
</feature>
<feature type="binding site" evidence="1">
    <location>
        <position position="123"/>
    </location>
    <ligand>
        <name>substrate</name>
    </ligand>
</feature>
<feature type="binding site" evidence="1">
    <location>
        <position position="154"/>
    </location>
    <ligand>
        <name>substrate</name>
    </ligand>
</feature>
<name>MDH_SULDN</name>